<organism>
    <name type="scientific">Drosophila melanogaster</name>
    <name type="common">Fruit fly</name>
    <dbReference type="NCBI Taxonomy" id="7227"/>
    <lineage>
        <taxon>Eukaryota</taxon>
        <taxon>Metazoa</taxon>
        <taxon>Ecdysozoa</taxon>
        <taxon>Arthropoda</taxon>
        <taxon>Hexapoda</taxon>
        <taxon>Insecta</taxon>
        <taxon>Pterygota</taxon>
        <taxon>Neoptera</taxon>
        <taxon>Endopterygota</taxon>
        <taxon>Diptera</taxon>
        <taxon>Brachycera</taxon>
        <taxon>Muscomorpha</taxon>
        <taxon>Ephydroidea</taxon>
        <taxon>Drosophilidae</taxon>
        <taxon>Drosophila</taxon>
        <taxon>Sophophora</taxon>
    </lineage>
</organism>
<proteinExistence type="evidence at protein level"/>
<evidence type="ECO:0000250" key="1">
    <source>
        <dbReference type="UniProtKB" id="Q9BZJ4"/>
    </source>
</evidence>
<evidence type="ECO:0000255" key="2"/>
<evidence type="ECO:0000255" key="3">
    <source>
        <dbReference type="PROSITE-ProRule" id="PRU00282"/>
    </source>
</evidence>
<evidence type="ECO:0000269" key="4">
    <source>
    </source>
</evidence>
<evidence type="ECO:0000303" key="5">
    <source>
    </source>
</evidence>
<evidence type="ECO:0000305" key="6"/>
<evidence type="ECO:0000305" key="7">
    <source>
    </source>
</evidence>
<evidence type="ECO:0000312" key="8">
    <source>
        <dbReference type="FlyBase" id="FBgn0031039"/>
    </source>
</evidence>
<accession>Q9VWG0</accession>
<accession>Q8SZT6</accession>
<keyword id="KW-0472">Membrane</keyword>
<keyword id="KW-0496">Mitochondrion</keyword>
<keyword id="KW-0999">Mitochondrion inner membrane</keyword>
<keyword id="KW-1185">Reference proteome</keyword>
<keyword id="KW-0677">Repeat</keyword>
<keyword id="KW-0812">Transmembrane</keyword>
<keyword id="KW-1133">Transmembrane helix</keyword>
<keyword id="KW-0813">Transport</keyword>
<sequence length="387" mass="42167">MATREACGQFAAASAAMAAASSQNPSKATMTDPRFRIRPLQQVASACTGAMVTACFMTPLDVIKTRLQAQQQALLSNKCFLYCNGLMDHICPCGPDTPNPAAAKPAPRFSGTIDAFIKISRTEGIGSLWSGLSPTLISALPSTIIYFVAYEQFKARFTDIHYKYTRRPDTIAHDIPHPIPFLVPLLAGVSGRILAVTCVSPVELIRTKMQSQRMTHAEMFGTIRQVVQSQGVLGLWRGLPPTILRDVPFSGIYWTCYEYLKSSFGVVEPTFSFSFAAGAISGSVAATITTPFDVVKTHEQIEFGEKFIFSDNPPKQVATKSVAMRLASIYRMGGVPAIFSGLGPRLFKVAPACAIMISSFEYGKSFFYHYNIDQHNRSNQATKGPGS</sequence>
<dbReference type="EMBL" id="AE014298">
    <property type="protein sequence ID" value="AAF48981.2"/>
    <property type="molecule type" value="Genomic_DNA"/>
</dbReference>
<dbReference type="EMBL" id="AE014298">
    <property type="protein sequence ID" value="AAF48982.2"/>
    <property type="molecule type" value="Genomic_DNA"/>
</dbReference>
<dbReference type="EMBL" id="AE014298">
    <property type="protein sequence ID" value="AAN09511.1"/>
    <property type="molecule type" value="Genomic_DNA"/>
</dbReference>
<dbReference type="EMBL" id="AE014298">
    <property type="protein sequence ID" value="AHN59918.1"/>
    <property type="molecule type" value="Genomic_DNA"/>
</dbReference>
<dbReference type="EMBL" id="AY070516">
    <property type="protein sequence ID" value="AAL47987.1"/>
    <property type="molecule type" value="mRNA"/>
</dbReference>
<dbReference type="EMBL" id="BT125676">
    <property type="protein sequence ID" value="ADN93321.1"/>
    <property type="molecule type" value="mRNA"/>
</dbReference>
<dbReference type="RefSeq" id="NP_001027071.1">
    <property type="nucleotide sequence ID" value="NM_001031900.3"/>
</dbReference>
<dbReference type="RefSeq" id="NP_001027072.1">
    <property type="nucleotide sequence ID" value="NM_001031901.2"/>
</dbReference>
<dbReference type="RefSeq" id="NP_001027073.1">
    <property type="nucleotide sequence ID" value="NM_001031902.2"/>
</dbReference>
<dbReference type="RefSeq" id="NP_001285448.1">
    <property type="nucleotide sequence ID" value="NM_001298519.1"/>
</dbReference>
<dbReference type="SMR" id="Q9VWG0"/>
<dbReference type="FunCoup" id="Q9VWG0">
    <property type="interactions" value="1849"/>
</dbReference>
<dbReference type="IntAct" id="Q9VWG0">
    <property type="interactions" value="1"/>
</dbReference>
<dbReference type="STRING" id="7227.FBpp0310500"/>
<dbReference type="PaxDb" id="7227-FBpp0074506"/>
<dbReference type="DNASU" id="3772641"/>
<dbReference type="EnsemblMetazoa" id="FBtr0074737">
    <property type="protein sequence ID" value="FBpp0074506"/>
    <property type="gene ID" value="FBgn0031039"/>
</dbReference>
<dbReference type="EnsemblMetazoa" id="FBtr0074738">
    <property type="protein sequence ID" value="FBpp0074507"/>
    <property type="gene ID" value="FBgn0031039"/>
</dbReference>
<dbReference type="EnsemblMetazoa" id="FBtr0074739">
    <property type="protein sequence ID" value="FBpp0074508"/>
    <property type="gene ID" value="FBgn0031039"/>
</dbReference>
<dbReference type="EnsemblMetazoa" id="FBtr0344069">
    <property type="protein sequence ID" value="FBpp0310500"/>
    <property type="gene ID" value="FBgn0031039"/>
</dbReference>
<dbReference type="GeneID" id="3772641"/>
<dbReference type="KEGG" id="dme:Dmel_CG14209"/>
<dbReference type="UCSC" id="CG14209-RB">
    <property type="organism name" value="d. melanogaster"/>
</dbReference>
<dbReference type="AGR" id="FB:FBgn0031039"/>
<dbReference type="CTD" id="3772641"/>
<dbReference type="FlyBase" id="FBgn0031039">
    <property type="gene designation" value="Shawn"/>
</dbReference>
<dbReference type="VEuPathDB" id="VectorBase:FBgn0031039"/>
<dbReference type="eggNOG" id="KOG0761">
    <property type="taxonomic scope" value="Eukaryota"/>
</dbReference>
<dbReference type="GeneTree" id="ENSGT00940000167433"/>
<dbReference type="HOGENOM" id="CLU_015166_0_0_1"/>
<dbReference type="InParanoid" id="Q9VWG0"/>
<dbReference type="OMA" id="FVSPIEM"/>
<dbReference type="OrthoDB" id="1747031at2759"/>
<dbReference type="PhylomeDB" id="Q9VWG0"/>
<dbReference type="BioGRID-ORCS" id="3772641">
    <property type="hits" value="0 hits in 3 CRISPR screens"/>
</dbReference>
<dbReference type="ChiTaRS" id="Tyler">
    <property type="organism name" value="fly"/>
</dbReference>
<dbReference type="GenomeRNAi" id="3772641"/>
<dbReference type="PRO" id="PR:Q9VWG0"/>
<dbReference type="Proteomes" id="UP000000803">
    <property type="component" value="Chromosome X"/>
</dbReference>
<dbReference type="Bgee" id="FBgn0031039">
    <property type="expression patterns" value="Expressed in seminal fluid secreting gland and 10 other cell types or tissues"/>
</dbReference>
<dbReference type="GO" id="GO:0005743">
    <property type="term" value="C:mitochondrial inner membrane"/>
    <property type="evidence" value="ECO:0000250"/>
    <property type="project" value="FlyBase"/>
</dbReference>
<dbReference type="GO" id="GO:0005739">
    <property type="term" value="C:mitochondrion"/>
    <property type="evidence" value="ECO:0000314"/>
    <property type="project" value="FlyBase"/>
</dbReference>
<dbReference type="GO" id="GO:0034634">
    <property type="term" value="F:glutathione transmembrane transporter activity"/>
    <property type="evidence" value="ECO:0000250"/>
    <property type="project" value="FlyBase"/>
</dbReference>
<dbReference type="GO" id="GO:0022857">
    <property type="term" value="F:transmembrane transporter activity"/>
    <property type="evidence" value="ECO:0000255"/>
    <property type="project" value="FlyBase"/>
</dbReference>
<dbReference type="GO" id="GO:0160007">
    <property type="term" value="P:glutathione import into mitochondrion"/>
    <property type="evidence" value="ECO:0000250"/>
    <property type="project" value="FlyBase"/>
</dbReference>
<dbReference type="GO" id="GO:0170036">
    <property type="term" value="P:import into the mitochondrion"/>
    <property type="evidence" value="ECO:0000318"/>
    <property type="project" value="GO_Central"/>
</dbReference>
<dbReference type="GO" id="GO:1990542">
    <property type="term" value="P:mitochondrial transmembrane transport"/>
    <property type="evidence" value="ECO:0000255"/>
    <property type="project" value="FlyBase"/>
</dbReference>
<dbReference type="FunFam" id="1.50.40.10:FF:000141">
    <property type="entry name" value="Mitochondrial carrier protein MTM1"/>
    <property type="match status" value="1"/>
</dbReference>
<dbReference type="Gene3D" id="1.50.40.10">
    <property type="entry name" value="Mitochondrial carrier domain"/>
    <property type="match status" value="1"/>
</dbReference>
<dbReference type="InterPro" id="IPR018108">
    <property type="entry name" value="Mitochondrial_sb/sol_carrier"/>
</dbReference>
<dbReference type="InterPro" id="IPR023395">
    <property type="entry name" value="Mt_carrier_dom_sf"/>
</dbReference>
<dbReference type="InterPro" id="IPR045315">
    <property type="entry name" value="Mtm1-like"/>
</dbReference>
<dbReference type="PANTHER" id="PTHR45760">
    <property type="entry name" value="FI19922P1-RELATED"/>
    <property type="match status" value="1"/>
</dbReference>
<dbReference type="PANTHER" id="PTHR45760:SF2">
    <property type="entry name" value="FI19922P1-RELATED"/>
    <property type="match status" value="1"/>
</dbReference>
<dbReference type="Pfam" id="PF00153">
    <property type="entry name" value="Mito_carr"/>
    <property type="match status" value="4"/>
</dbReference>
<dbReference type="SUPFAM" id="SSF103506">
    <property type="entry name" value="Mitochondrial carrier"/>
    <property type="match status" value="1"/>
</dbReference>
<dbReference type="PROSITE" id="PS50920">
    <property type="entry name" value="SOLCAR"/>
    <property type="match status" value="3"/>
</dbReference>
<comment type="function">
    <text evidence="1">Mitochondrial transporter required for glutathione import into mitochondria.</text>
</comment>
<comment type="subcellular location">
    <subcellularLocation>
        <location evidence="7">Mitochondrion inner membrane</location>
        <topology evidence="2">Multi-pass membrane protein</topology>
    </subcellularLocation>
</comment>
<comment type="disruption phenotype">
    <text evidence="4">Lethality caused by neurodegeneration and synaptic defects.</text>
</comment>
<comment type="similarity">
    <text evidence="6">Belongs to the mitochondrial carrier (TC 2.A.29) family.</text>
</comment>
<name>SHAWN_DROME</name>
<reference key="1">
    <citation type="journal article" date="2000" name="Science">
        <title>The genome sequence of Drosophila melanogaster.</title>
        <authorList>
            <person name="Adams M.D."/>
            <person name="Celniker S.E."/>
            <person name="Holt R.A."/>
            <person name="Evans C.A."/>
            <person name="Gocayne J.D."/>
            <person name="Amanatides P.G."/>
            <person name="Scherer S.E."/>
            <person name="Li P.W."/>
            <person name="Hoskins R.A."/>
            <person name="Galle R.F."/>
            <person name="George R.A."/>
            <person name="Lewis S.E."/>
            <person name="Richards S."/>
            <person name="Ashburner M."/>
            <person name="Henderson S.N."/>
            <person name="Sutton G.G."/>
            <person name="Wortman J.R."/>
            <person name="Yandell M.D."/>
            <person name="Zhang Q."/>
            <person name="Chen L.X."/>
            <person name="Brandon R.C."/>
            <person name="Rogers Y.-H.C."/>
            <person name="Blazej R.G."/>
            <person name="Champe M."/>
            <person name="Pfeiffer B.D."/>
            <person name="Wan K.H."/>
            <person name="Doyle C."/>
            <person name="Baxter E.G."/>
            <person name="Helt G."/>
            <person name="Nelson C.R."/>
            <person name="Miklos G.L.G."/>
            <person name="Abril J.F."/>
            <person name="Agbayani A."/>
            <person name="An H.-J."/>
            <person name="Andrews-Pfannkoch C."/>
            <person name="Baldwin D."/>
            <person name="Ballew R.M."/>
            <person name="Basu A."/>
            <person name="Baxendale J."/>
            <person name="Bayraktaroglu L."/>
            <person name="Beasley E.M."/>
            <person name="Beeson K.Y."/>
            <person name="Benos P.V."/>
            <person name="Berman B.P."/>
            <person name="Bhandari D."/>
            <person name="Bolshakov S."/>
            <person name="Borkova D."/>
            <person name="Botchan M.R."/>
            <person name="Bouck J."/>
            <person name="Brokstein P."/>
            <person name="Brottier P."/>
            <person name="Burtis K.C."/>
            <person name="Busam D.A."/>
            <person name="Butler H."/>
            <person name="Cadieu E."/>
            <person name="Center A."/>
            <person name="Chandra I."/>
            <person name="Cherry J.M."/>
            <person name="Cawley S."/>
            <person name="Dahlke C."/>
            <person name="Davenport L.B."/>
            <person name="Davies P."/>
            <person name="de Pablos B."/>
            <person name="Delcher A."/>
            <person name="Deng Z."/>
            <person name="Mays A.D."/>
            <person name="Dew I."/>
            <person name="Dietz S.M."/>
            <person name="Dodson K."/>
            <person name="Doup L.E."/>
            <person name="Downes M."/>
            <person name="Dugan-Rocha S."/>
            <person name="Dunkov B.C."/>
            <person name="Dunn P."/>
            <person name="Durbin K.J."/>
            <person name="Evangelista C.C."/>
            <person name="Ferraz C."/>
            <person name="Ferriera S."/>
            <person name="Fleischmann W."/>
            <person name="Fosler C."/>
            <person name="Gabrielian A.E."/>
            <person name="Garg N.S."/>
            <person name="Gelbart W.M."/>
            <person name="Glasser K."/>
            <person name="Glodek A."/>
            <person name="Gong F."/>
            <person name="Gorrell J.H."/>
            <person name="Gu Z."/>
            <person name="Guan P."/>
            <person name="Harris M."/>
            <person name="Harris N.L."/>
            <person name="Harvey D.A."/>
            <person name="Heiman T.J."/>
            <person name="Hernandez J.R."/>
            <person name="Houck J."/>
            <person name="Hostin D."/>
            <person name="Houston K.A."/>
            <person name="Howland T.J."/>
            <person name="Wei M.-H."/>
            <person name="Ibegwam C."/>
            <person name="Jalali M."/>
            <person name="Kalush F."/>
            <person name="Karpen G.H."/>
            <person name="Ke Z."/>
            <person name="Kennison J.A."/>
            <person name="Ketchum K.A."/>
            <person name="Kimmel B.E."/>
            <person name="Kodira C.D."/>
            <person name="Kraft C.L."/>
            <person name="Kravitz S."/>
            <person name="Kulp D."/>
            <person name="Lai Z."/>
            <person name="Lasko P."/>
            <person name="Lei Y."/>
            <person name="Levitsky A.A."/>
            <person name="Li J.H."/>
            <person name="Li Z."/>
            <person name="Liang Y."/>
            <person name="Lin X."/>
            <person name="Liu X."/>
            <person name="Mattei B."/>
            <person name="McIntosh T.C."/>
            <person name="McLeod M.P."/>
            <person name="McPherson D."/>
            <person name="Merkulov G."/>
            <person name="Milshina N.V."/>
            <person name="Mobarry C."/>
            <person name="Morris J."/>
            <person name="Moshrefi A."/>
            <person name="Mount S.M."/>
            <person name="Moy M."/>
            <person name="Murphy B."/>
            <person name="Murphy L."/>
            <person name="Muzny D.M."/>
            <person name="Nelson D.L."/>
            <person name="Nelson D.R."/>
            <person name="Nelson K.A."/>
            <person name="Nixon K."/>
            <person name="Nusskern D.R."/>
            <person name="Pacleb J.M."/>
            <person name="Palazzolo M."/>
            <person name="Pittman G.S."/>
            <person name="Pan S."/>
            <person name="Pollard J."/>
            <person name="Puri V."/>
            <person name="Reese M.G."/>
            <person name="Reinert K."/>
            <person name="Remington K."/>
            <person name="Saunders R.D.C."/>
            <person name="Scheeler F."/>
            <person name="Shen H."/>
            <person name="Shue B.C."/>
            <person name="Siden-Kiamos I."/>
            <person name="Simpson M."/>
            <person name="Skupski M.P."/>
            <person name="Smith T.J."/>
            <person name="Spier E."/>
            <person name="Spradling A.C."/>
            <person name="Stapleton M."/>
            <person name="Strong R."/>
            <person name="Sun E."/>
            <person name="Svirskas R."/>
            <person name="Tector C."/>
            <person name="Turner R."/>
            <person name="Venter E."/>
            <person name="Wang A.H."/>
            <person name="Wang X."/>
            <person name="Wang Z.-Y."/>
            <person name="Wassarman D.A."/>
            <person name="Weinstock G.M."/>
            <person name="Weissenbach J."/>
            <person name="Williams S.M."/>
            <person name="Woodage T."/>
            <person name="Worley K.C."/>
            <person name="Wu D."/>
            <person name="Yang S."/>
            <person name="Yao Q.A."/>
            <person name="Ye J."/>
            <person name="Yeh R.-F."/>
            <person name="Zaveri J.S."/>
            <person name="Zhan M."/>
            <person name="Zhang G."/>
            <person name="Zhao Q."/>
            <person name="Zheng L."/>
            <person name="Zheng X.H."/>
            <person name="Zhong F.N."/>
            <person name="Zhong W."/>
            <person name="Zhou X."/>
            <person name="Zhu S.C."/>
            <person name="Zhu X."/>
            <person name="Smith H.O."/>
            <person name="Gibbs R.A."/>
            <person name="Myers E.W."/>
            <person name="Rubin G.M."/>
            <person name="Venter J.C."/>
        </authorList>
    </citation>
    <scope>NUCLEOTIDE SEQUENCE [LARGE SCALE GENOMIC DNA]</scope>
    <source>
        <strain>Berkeley</strain>
    </source>
</reference>
<reference key="2">
    <citation type="journal article" date="2002" name="Genome Biol.">
        <title>Annotation of the Drosophila melanogaster euchromatic genome: a systematic review.</title>
        <authorList>
            <person name="Misra S."/>
            <person name="Crosby M.A."/>
            <person name="Mungall C.J."/>
            <person name="Matthews B.B."/>
            <person name="Campbell K.S."/>
            <person name="Hradecky P."/>
            <person name="Huang Y."/>
            <person name="Kaminker J.S."/>
            <person name="Millburn G.H."/>
            <person name="Prochnik S.E."/>
            <person name="Smith C.D."/>
            <person name="Tupy J.L."/>
            <person name="Whitfield E.J."/>
            <person name="Bayraktaroglu L."/>
            <person name="Berman B.P."/>
            <person name="Bettencourt B.R."/>
            <person name="Celniker S.E."/>
            <person name="de Grey A.D.N.J."/>
            <person name="Drysdale R.A."/>
            <person name="Harris N.L."/>
            <person name="Richter J."/>
            <person name="Russo S."/>
            <person name="Schroeder A.J."/>
            <person name="Shu S.Q."/>
            <person name="Stapleton M."/>
            <person name="Yamada C."/>
            <person name="Ashburner M."/>
            <person name="Gelbart W.M."/>
            <person name="Rubin G.M."/>
            <person name="Lewis S.E."/>
        </authorList>
    </citation>
    <scope>GENOME REANNOTATION</scope>
    <source>
        <strain>Berkeley</strain>
    </source>
</reference>
<reference key="3">
    <citation type="journal article" date="2002" name="Genome Biol.">
        <title>A Drosophila full-length cDNA resource.</title>
        <authorList>
            <person name="Stapleton M."/>
            <person name="Carlson J.W."/>
            <person name="Brokstein P."/>
            <person name="Yu C."/>
            <person name="Champe M."/>
            <person name="George R.A."/>
            <person name="Guarin H."/>
            <person name="Kronmiller B."/>
            <person name="Pacleb J.M."/>
            <person name="Park S."/>
            <person name="Wan K.H."/>
            <person name="Rubin G.M."/>
            <person name="Celniker S.E."/>
        </authorList>
    </citation>
    <scope>NUCLEOTIDE SEQUENCE [LARGE SCALE MRNA]</scope>
    <source>
        <strain>Berkeley</strain>
        <tissue>Head</tissue>
    </source>
</reference>
<reference key="4">
    <citation type="submission" date="2010-09" db="EMBL/GenBank/DDBJ databases">
        <authorList>
            <person name="Carlson J."/>
            <person name="Booth B."/>
            <person name="Frise E."/>
            <person name="Park S."/>
            <person name="Wan K."/>
            <person name="Yu C."/>
            <person name="Celniker S."/>
        </authorList>
    </citation>
    <scope>NUCLEOTIDE SEQUENCE [LARGE SCALE MRNA]</scope>
    <source>
        <strain>Berkeley</strain>
        <tissue>Head</tissue>
    </source>
</reference>
<reference key="5">
    <citation type="journal article" date="2016" name="J. Neurosci.">
        <title>Shawn, the Drosophila Homolog of SLC25A39/40, Is a Mitochondrial Carrier That Promotes Neuronal Survival.</title>
        <authorList>
            <person name="Slabbaert J.R."/>
            <person name="Kuenen S."/>
            <person name="Swerts J."/>
            <person name="Maes I."/>
            <person name="Uytterhoeven V."/>
            <person name="Kasprowicz J."/>
            <person name="Fernandes A.C."/>
            <person name="Blust R."/>
            <person name="Verstreken P."/>
        </authorList>
    </citation>
    <scope>SUBCELLULAR LOCATION</scope>
    <scope>DISRUPTION PHENOTYPE</scope>
    <scope>MUTAGENESIS OF GLY-278</scope>
</reference>
<protein>
    <recommendedName>
        <fullName evidence="6">Solute carrier family 25 protein Shawn</fullName>
    </recommendedName>
    <alternativeName>
        <fullName>Solute carrier family 25 member 39 homolog</fullName>
    </alternativeName>
</protein>
<feature type="chain" id="PRO_0000454894" description="Solute carrier family 25 protein Shawn">
    <location>
        <begin position="1"/>
        <end position="387"/>
    </location>
</feature>
<feature type="transmembrane region" description="Helical; Name=1" evidence="2">
    <location>
        <begin position="43"/>
        <end position="63"/>
    </location>
</feature>
<feature type="transmembrane region" description="Helical; Name=2" evidence="2">
    <location>
        <begin position="128"/>
        <end position="148"/>
    </location>
</feature>
<feature type="transmembrane region" description="Helical; Name=3" evidence="2">
    <location>
        <begin position="179"/>
        <end position="199"/>
    </location>
</feature>
<feature type="transmembrane region" description="Helical; Name=4" evidence="2">
    <location>
        <begin position="235"/>
        <end position="255"/>
    </location>
</feature>
<feature type="transmembrane region" description="Helical; Name=5" evidence="2">
    <location>
        <begin position="275"/>
        <end position="295"/>
    </location>
</feature>
<feature type="transmembrane region" description="Helical; Name=6" evidence="2">
    <location>
        <begin position="337"/>
        <end position="357"/>
    </location>
</feature>
<feature type="repeat" description="Solcar" evidence="3">
    <location>
        <begin position="37"/>
        <end position="156"/>
    </location>
</feature>
<feature type="repeat" description="Solcar" evidence="3">
    <location>
        <begin position="179"/>
        <end position="263"/>
    </location>
</feature>
<feature type="repeat" description="Solcar" evidence="3">
    <location>
        <begin position="269"/>
        <end position="366"/>
    </location>
</feature>
<feature type="mutagenesis site" description="Mutant flies show an accumulation of reactive oxygen species, mitochondrial dysfunction and neurodegeneration." evidence="4">
    <original>G</original>
    <variation>E</variation>
    <location>
        <position position="278"/>
    </location>
</feature>
<gene>
    <name evidence="5 8" type="primary">Shawn</name>
    <name evidence="8" type="ORF">CG14209</name>
</gene>